<reference key="1">
    <citation type="submission" date="2006-08" db="EMBL/GenBank/DDBJ databases">
        <authorList>
            <person name="Liu G.Y."/>
        </authorList>
    </citation>
    <scope>NUCLEOTIDE SEQUENCE [LARGE SCALE MRNA]</scope>
</reference>
<evidence type="ECO:0000250" key="1">
    <source>
        <dbReference type="UniProtKB" id="P62330"/>
    </source>
</evidence>
<evidence type="ECO:0000250" key="2">
    <source>
        <dbReference type="UniProtKB" id="P62331"/>
    </source>
</evidence>
<evidence type="ECO:0000250" key="3">
    <source>
        <dbReference type="UniProtKB" id="P62332"/>
    </source>
</evidence>
<evidence type="ECO:0000305" key="4"/>
<dbReference type="EC" id="3.6.5.2" evidence="1"/>
<dbReference type="EMBL" id="DQ915493">
    <property type="protein sequence ID" value="ABJ09398.1"/>
    <property type="molecule type" value="mRNA"/>
</dbReference>
<dbReference type="RefSeq" id="NP_001072145.1">
    <property type="nucleotide sequence ID" value="NM_001078677.1"/>
</dbReference>
<dbReference type="RefSeq" id="XP_005659996.1">
    <property type="nucleotide sequence ID" value="XM_005659939.3"/>
</dbReference>
<dbReference type="RefSeq" id="XP_020939992.1">
    <property type="nucleotide sequence ID" value="XM_021084333.1"/>
</dbReference>
<dbReference type="SMR" id="Q007T5"/>
<dbReference type="FunCoup" id="Q007T5">
    <property type="interactions" value="2394"/>
</dbReference>
<dbReference type="STRING" id="9823.ENSSSCP00000058854"/>
<dbReference type="PaxDb" id="9823-ENSSSCP00000005391"/>
<dbReference type="PeptideAtlas" id="Q007T5"/>
<dbReference type="Ensembl" id="ENSSSCT00000005528.5">
    <property type="protein sequence ID" value="ENSSSCP00000005391.4"/>
    <property type="gene ID" value="ENSSSCG00000005012.5"/>
</dbReference>
<dbReference type="Ensembl" id="ENSSSCT00000058177.3">
    <property type="protein sequence ID" value="ENSSSCP00000058854.1"/>
    <property type="gene ID" value="ENSSSCG00000005012.5"/>
</dbReference>
<dbReference type="Ensembl" id="ENSSSCT00000074052.2">
    <property type="protein sequence ID" value="ENSSSCP00000064421.1"/>
    <property type="gene ID" value="ENSSSCG00000005012.5"/>
</dbReference>
<dbReference type="Ensembl" id="ENSSSCT00015036207.1">
    <property type="protein sequence ID" value="ENSSSCP00015014421.1"/>
    <property type="gene ID" value="ENSSSCG00015027240.1"/>
</dbReference>
<dbReference type="Ensembl" id="ENSSSCT00015036246.1">
    <property type="protein sequence ID" value="ENSSSCP00015014438.1"/>
    <property type="gene ID" value="ENSSSCG00015027240.1"/>
</dbReference>
<dbReference type="Ensembl" id="ENSSSCT00015036282.1">
    <property type="protein sequence ID" value="ENSSSCP00015014456.1"/>
    <property type="gene ID" value="ENSSSCG00015027240.1"/>
</dbReference>
<dbReference type="Ensembl" id="ENSSSCT00025105859.1">
    <property type="protein sequence ID" value="ENSSSCP00025047388.1"/>
    <property type="gene ID" value="ENSSSCG00025076444.1"/>
</dbReference>
<dbReference type="Ensembl" id="ENSSSCT00025105874.1">
    <property type="protein sequence ID" value="ENSSSCP00025047400.1"/>
    <property type="gene ID" value="ENSSSCG00025076444.1"/>
</dbReference>
<dbReference type="Ensembl" id="ENSSSCT00025105884.1">
    <property type="protein sequence ID" value="ENSSSCP00025047408.1"/>
    <property type="gene ID" value="ENSSSCG00025076444.1"/>
</dbReference>
<dbReference type="Ensembl" id="ENSSSCT00030094340.1">
    <property type="protein sequence ID" value="ENSSSCP00030043491.1"/>
    <property type="gene ID" value="ENSSSCG00030067449.1"/>
</dbReference>
<dbReference type="Ensembl" id="ENSSSCT00030094368.1">
    <property type="protein sequence ID" value="ENSSSCP00030043503.1"/>
    <property type="gene ID" value="ENSSSCG00030067449.1"/>
</dbReference>
<dbReference type="Ensembl" id="ENSSSCT00030094386.1">
    <property type="protein sequence ID" value="ENSSSCP00030043509.1"/>
    <property type="gene ID" value="ENSSSCG00030067449.1"/>
</dbReference>
<dbReference type="Ensembl" id="ENSSSCT00035025265.1">
    <property type="protein sequence ID" value="ENSSSCP00035009549.1"/>
    <property type="gene ID" value="ENSSSCG00035019495.1"/>
</dbReference>
<dbReference type="Ensembl" id="ENSSSCT00035025273.1">
    <property type="protein sequence ID" value="ENSSSCP00035009551.1"/>
    <property type="gene ID" value="ENSSSCG00035019495.1"/>
</dbReference>
<dbReference type="Ensembl" id="ENSSSCT00035025274.1">
    <property type="protein sequence ID" value="ENSSSCP00035009552.1"/>
    <property type="gene ID" value="ENSSSCG00035019495.1"/>
</dbReference>
<dbReference type="Ensembl" id="ENSSSCT00040084027.1">
    <property type="protein sequence ID" value="ENSSSCP00040036622.1"/>
    <property type="gene ID" value="ENSSSCG00040061728.1"/>
</dbReference>
<dbReference type="Ensembl" id="ENSSSCT00040084060.1">
    <property type="protein sequence ID" value="ENSSSCP00040036638.1"/>
    <property type="gene ID" value="ENSSSCG00040061728.1"/>
</dbReference>
<dbReference type="Ensembl" id="ENSSSCT00040084096.1">
    <property type="protein sequence ID" value="ENSSSCP00040036659.1"/>
    <property type="gene ID" value="ENSSSCG00040061728.1"/>
</dbReference>
<dbReference type="Ensembl" id="ENSSSCT00045014781.1">
    <property type="protein sequence ID" value="ENSSSCP00045010256.1"/>
    <property type="gene ID" value="ENSSSCG00045008747.1"/>
</dbReference>
<dbReference type="Ensembl" id="ENSSSCT00045014803.1">
    <property type="protein sequence ID" value="ENSSSCP00045010272.1"/>
    <property type="gene ID" value="ENSSSCG00045008747.1"/>
</dbReference>
<dbReference type="Ensembl" id="ENSSSCT00045014827.1">
    <property type="protein sequence ID" value="ENSSSCP00045010290.1"/>
    <property type="gene ID" value="ENSSSCG00045008747.1"/>
</dbReference>
<dbReference type="Ensembl" id="ENSSSCT00050098190.1">
    <property type="protein sequence ID" value="ENSSSCP00050042385.1"/>
    <property type="gene ID" value="ENSSSCG00050071942.1"/>
</dbReference>
<dbReference type="Ensembl" id="ENSSSCT00050098196.1">
    <property type="protein sequence ID" value="ENSSSCP00050042389.1"/>
    <property type="gene ID" value="ENSSSCG00050071942.1"/>
</dbReference>
<dbReference type="Ensembl" id="ENSSSCT00050098202.1">
    <property type="protein sequence ID" value="ENSSSCP00050042391.1"/>
    <property type="gene ID" value="ENSSSCG00050071942.1"/>
</dbReference>
<dbReference type="Ensembl" id="ENSSSCT00055021488.1">
    <property type="protein sequence ID" value="ENSSSCP00055017025.1"/>
    <property type="gene ID" value="ENSSSCG00055010938.1"/>
</dbReference>
<dbReference type="Ensembl" id="ENSSSCT00055021515.1">
    <property type="protein sequence ID" value="ENSSSCP00055017047.1"/>
    <property type="gene ID" value="ENSSSCG00055010938.1"/>
</dbReference>
<dbReference type="Ensembl" id="ENSSSCT00055021529.1">
    <property type="protein sequence ID" value="ENSSSCP00055017057.1"/>
    <property type="gene ID" value="ENSSSCG00055010938.1"/>
</dbReference>
<dbReference type="Ensembl" id="ENSSSCT00060010997.1">
    <property type="protein sequence ID" value="ENSSSCP00060004061.1"/>
    <property type="gene ID" value="ENSSSCG00060008590.1"/>
</dbReference>
<dbReference type="Ensembl" id="ENSSSCT00060011000.1">
    <property type="protein sequence ID" value="ENSSSCP00060004063.1"/>
    <property type="gene ID" value="ENSSSCG00060008590.1"/>
</dbReference>
<dbReference type="Ensembl" id="ENSSSCT00060011003.1">
    <property type="protein sequence ID" value="ENSSSCP00060004065.1"/>
    <property type="gene ID" value="ENSSSCG00060008590.1"/>
</dbReference>
<dbReference type="Ensembl" id="ENSSSCT00065083268.1">
    <property type="protein sequence ID" value="ENSSSCP00065036298.1"/>
    <property type="gene ID" value="ENSSSCG00065060772.1"/>
</dbReference>
<dbReference type="Ensembl" id="ENSSSCT00065083279.1">
    <property type="protein sequence ID" value="ENSSSCP00065036304.1"/>
    <property type="gene ID" value="ENSSSCG00065060772.1"/>
</dbReference>
<dbReference type="Ensembl" id="ENSSSCT00065083291.1">
    <property type="protein sequence ID" value="ENSSSCP00065036311.1"/>
    <property type="gene ID" value="ENSSSCG00065060772.1"/>
</dbReference>
<dbReference type="Ensembl" id="ENSSSCT00070001826.1">
    <property type="protein sequence ID" value="ENSSSCP00070001520.1"/>
    <property type="gene ID" value="ENSSSCG00070000951.1"/>
</dbReference>
<dbReference type="Ensembl" id="ENSSSCT00070001832.1">
    <property type="protein sequence ID" value="ENSSSCP00070001526.1"/>
    <property type="gene ID" value="ENSSSCG00070000951.1"/>
</dbReference>
<dbReference type="Ensembl" id="ENSSSCT00070001838.1">
    <property type="protein sequence ID" value="ENSSSCP00070001532.1"/>
    <property type="gene ID" value="ENSSSCG00070000951.1"/>
</dbReference>
<dbReference type="Ensembl" id="ENSSSCT00085037480">
    <property type="protein sequence ID" value="ENSSSCP00085026046"/>
    <property type="gene ID" value="ENSSSCG00085019647"/>
</dbReference>
<dbReference type="Ensembl" id="ENSSSCT00085037482">
    <property type="protein sequence ID" value="ENSSSCP00085026048"/>
    <property type="gene ID" value="ENSSSCG00085019647"/>
</dbReference>
<dbReference type="Ensembl" id="ENSSSCT00090041902">
    <property type="protein sequence ID" value="ENSSSCP00090026041"/>
    <property type="gene ID" value="ENSSSCG00090023664"/>
</dbReference>
<dbReference type="Ensembl" id="ENSSSCT00090041913">
    <property type="protein sequence ID" value="ENSSSCP00090026052"/>
    <property type="gene ID" value="ENSSSCG00090023664"/>
</dbReference>
<dbReference type="Ensembl" id="ENSSSCT00090041918">
    <property type="protein sequence ID" value="ENSSSCP00090026057"/>
    <property type="gene ID" value="ENSSSCG00090023664"/>
</dbReference>
<dbReference type="Ensembl" id="ENSSSCT00090041923">
    <property type="protein sequence ID" value="ENSSSCP00090026062"/>
    <property type="gene ID" value="ENSSSCG00090023664"/>
</dbReference>
<dbReference type="Ensembl" id="ENSSSCT00090041927">
    <property type="protein sequence ID" value="ENSSSCP00090026065"/>
    <property type="gene ID" value="ENSSSCG00090023664"/>
</dbReference>
<dbReference type="Ensembl" id="ENSSSCT00090041938">
    <property type="protein sequence ID" value="ENSSSCP00090026072"/>
    <property type="gene ID" value="ENSSSCG00090023664"/>
</dbReference>
<dbReference type="Ensembl" id="ENSSSCT00105031828">
    <property type="protein sequence ID" value="ENSSSCP00105022369"/>
    <property type="gene ID" value="ENSSSCG00105016488"/>
</dbReference>
<dbReference type="Ensembl" id="ENSSSCT00105031838">
    <property type="protein sequence ID" value="ENSSSCP00105022377"/>
    <property type="gene ID" value="ENSSSCG00105016488"/>
</dbReference>
<dbReference type="Ensembl" id="ENSSSCT00110014833">
    <property type="protein sequence ID" value="ENSSSCP00110010307"/>
    <property type="gene ID" value="ENSSSCG00110007651"/>
</dbReference>
<dbReference type="Ensembl" id="ENSSSCT00110014841">
    <property type="protein sequence ID" value="ENSSSCP00110010312"/>
    <property type="gene ID" value="ENSSSCG00110007651"/>
</dbReference>
<dbReference type="Ensembl" id="ENSSSCT00115021179">
    <property type="protein sequence ID" value="ENSSSCP00115020075"/>
    <property type="gene ID" value="ENSSSCG00115012262"/>
</dbReference>
<dbReference type="Ensembl" id="ENSSSCT00130047992">
    <property type="protein sequence ID" value="ENSSSCP00130033773"/>
    <property type="gene ID" value="ENSSSCG00130024833"/>
</dbReference>
<dbReference type="Ensembl" id="ENSSSCT00130048026">
    <property type="protein sequence ID" value="ENSSSCP00130033792"/>
    <property type="gene ID" value="ENSSSCG00130024833"/>
</dbReference>
<dbReference type="Ensembl" id="ENSSSCT00130048043">
    <property type="protein sequence ID" value="ENSSSCP00130033804"/>
    <property type="gene ID" value="ENSSSCG00130024833"/>
</dbReference>
<dbReference type="Ensembl" id="ENSSSCT00130048051">
    <property type="protein sequence ID" value="ENSSSCP00130033811"/>
    <property type="gene ID" value="ENSSSCG00130024833"/>
</dbReference>
<dbReference type="Ensembl" id="ENSSSCT00130048068">
    <property type="protein sequence ID" value="ENSSSCP00130033820"/>
    <property type="gene ID" value="ENSSSCG00130024833"/>
</dbReference>
<dbReference type="Ensembl" id="ENSSSCT00130048079">
    <property type="protein sequence ID" value="ENSSSCP00130033829"/>
    <property type="gene ID" value="ENSSSCG00130024833"/>
</dbReference>
<dbReference type="GeneID" id="780425"/>
<dbReference type="KEGG" id="ssc:780425"/>
<dbReference type="CTD" id="382"/>
<dbReference type="VGNC" id="VGNC:85448">
    <property type="gene designation" value="ARF6"/>
</dbReference>
<dbReference type="eggNOG" id="KOG0071">
    <property type="taxonomic scope" value="Eukaryota"/>
</dbReference>
<dbReference type="GeneTree" id="ENSGT00940000156593"/>
<dbReference type="HOGENOM" id="CLU_040729_9_4_1"/>
<dbReference type="InParanoid" id="Q007T5"/>
<dbReference type="OMA" id="GGQISKM"/>
<dbReference type="OrthoDB" id="2011769at2759"/>
<dbReference type="TreeFam" id="TF300808"/>
<dbReference type="Reactome" id="R-SSC-8854214">
    <property type="pathway name" value="TBC/RABGAPs"/>
</dbReference>
<dbReference type="Reactome" id="R-SSC-8856828">
    <property type="pathway name" value="Clathrin-mediated endocytosis"/>
</dbReference>
<dbReference type="Reactome" id="R-SSC-8875656">
    <property type="pathway name" value="MET receptor recycling"/>
</dbReference>
<dbReference type="Proteomes" id="UP000008227">
    <property type="component" value="Chromosome 1"/>
</dbReference>
<dbReference type="Proteomes" id="UP000314985">
    <property type="component" value="Chromosome 1"/>
</dbReference>
<dbReference type="Proteomes" id="UP000694570">
    <property type="component" value="Unplaced"/>
</dbReference>
<dbReference type="Proteomes" id="UP000694571">
    <property type="component" value="Unplaced"/>
</dbReference>
<dbReference type="Proteomes" id="UP000694720">
    <property type="component" value="Unplaced"/>
</dbReference>
<dbReference type="Proteomes" id="UP000694722">
    <property type="component" value="Unplaced"/>
</dbReference>
<dbReference type="Proteomes" id="UP000694723">
    <property type="component" value="Unplaced"/>
</dbReference>
<dbReference type="Proteomes" id="UP000694724">
    <property type="component" value="Unplaced"/>
</dbReference>
<dbReference type="Proteomes" id="UP000694725">
    <property type="component" value="Unplaced"/>
</dbReference>
<dbReference type="Proteomes" id="UP000694726">
    <property type="component" value="Unplaced"/>
</dbReference>
<dbReference type="Proteomes" id="UP000694727">
    <property type="component" value="Unplaced"/>
</dbReference>
<dbReference type="Proteomes" id="UP000694728">
    <property type="component" value="Unplaced"/>
</dbReference>
<dbReference type="Bgee" id="ENSSSCG00000005012">
    <property type="expression patterns" value="Expressed in caecum and 42 other cell types or tissues"/>
</dbReference>
<dbReference type="ExpressionAtlas" id="Q007T5">
    <property type="expression patterns" value="baseline and differential"/>
</dbReference>
<dbReference type="GO" id="GO:0005938">
    <property type="term" value="C:cell cortex"/>
    <property type="evidence" value="ECO:0007669"/>
    <property type="project" value="Ensembl"/>
</dbReference>
<dbReference type="GO" id="GO:0032154">
    <property type="term" value="C:cleavage furrow"/>
    <property type="evidence" value="ECO:0000250"/>
    <property type="project" value="UniProtKB"/>
</dbReference>
<dbReference type="GO" id="GO:0005737">
    <property type="term" value="C:cytoplasm"/>
    <property type="evidence" value="ECO:0000318"/>
    <property type="project" value="GO_Central"/>
</dbReference>
<dbReference type="GO" id="GO:0005829">
    <property type="term" value="C:cytosol"/>
    <property type="evidence" value="ECO:0000250"/>
    <property type="project" value="UniProtKB"/>
</dbReference>
<dbReference type="GO" id="GO:0031901">
    <property type="term" value="C:early endosome membrane"/>
    <property type="evidence" value="ECO:0007669"/>
    <property type="project" value="UniProtKB-SubCell"/>
</dbReference>
<dbReference type="GO" id="GO:0030139">
    <property type="term" value="C:endocytic vesicle"/>
    <property type="evidence" value="ECO:0000250"/>
    <property type="project" value="UniProtKB"/>
</dbReference>
<dbReference type="GO" id="GO:0005768">
    <property type="term" value="C:endosome"/>
    <property type="evidence" value="ECO:0000250"/>
    <property type="project" value="UniProtKB"/>
</dbReference>
<dbReference type="GO" id="GO:0031527">
    <property type="term" value="C:filopodium membrane"/>
    <property type="evidence" value="ECO:0007669"/>
    <property type="project" value="UniProtKB-SubCell"/>
</dbReference>
<dbReference type="GO" id="GO:0090543">
    <property type="term" value="C:Flemming body"/>
    <property type="evidence" value="ECO:0000250"/>
    <property type="project" value="UniProtKB"/>
</dbReference>
<dbReference type="GO" id="GO:0005794">
    <property type="term" value="C:Golgi apparatus"/>
    <property type="evidence" value="ECO:0007669"/>
    <property type="project" value="UniProtKB-SubCell"/>
</dbReference>
<dbReference type="GO" id="GO:0005886">
    <property type="term" value="C:plasma membrane"/>
    <property type="evidence" value="ECO:0000250"/>
    <property type="project" value="UniProtKB"/>
</dbReference>
<dbReference type="GO" id="GO:0055038">
    <property type="term" value="C:recycling endosome membrane"/>
    <property type="evidence" value="ECO:0000250"/>
    <property type="project" value="UniProtKB"/>
</dbReference>
<dbReference type="GO" id="GO:0001726">
    <property type="term" value="C:ruffle"/>
    <property type="evidence" value="ECO:0000318"/>
    <property type="project" value="GO_Central"/>
</dbReference>
<dbReference type="GO" id="GO:0003925">
    <property type="term" value="F:G protein activity"/>
    <property type="evidence" value="ECO:0000250"/>
    <property type="project" value="UniProtKB"/>
</dbReference>
<dbReference type="GO" id="GO:0019003">
    <property type="term" value="F:GDP binding"/>
    <property type="evidence" value="ECO:0000250"/>
    <property type="project" value="UniProtKB"/>
</dbReference>
<dbReference type="GO" id="GO:0005525">
    <property type="term" value="F:GTP binding"/>
    <property type="evidence" value="ECO:0000250"/>
    <property type="project" value="UniProtKB"/>
</dbReference>
<dbReference type="GO" id="GO:0035591">
    <property type="term" value="F:signaling adaptor activity"/>
    <property type="evidence" value="ECO:0007669"/>
    <property type="project" value="Ensembl"/>
</dbReference>
<dbReference type="GO" id="GO:0031996">
    <property type="term" value="F:thioesterase binding"/>
    <property type="evidence" value="ECO:0007669"/>
    <property type="project" value="Ensembl"/>
</dbReference>
<dbReference type="GO" id="GO:0030154">
    <property type="term" value="P:cell differentiation"/>
    <property type="evidence" value="ECO:0007669"/>
    <property type="project" value="UniProtKB-KW"/>
</dbReference>
<dbReference type="GO" id="GO:0030866">
    <property type="term" value="P:cortical actin cytoskeleton organization"/>
    <property type="evidence" value="ECO:0007669"/>
    <property type="project" value="Ensembl"/>
</dbReference>
<dbReference type="GO" id="GO:0032456">
    <property type="term" value="P:endocytic recycling"/>
    <property type="evidence" value="ECO:0007669"/>
    <property type="project" value="Ensembl"/>
</dbReference>
<dbReference type="GO" id="GO:1902217">
    <property type="term" value="P:erythrocyte apoptotic process"/>
    <property type="evidence" value="ECO:0007669"/>
    <property type="project" value="Ensembl"/>
</dbReference>
<dbReference type="GO" id="GO:0090162">
    <property type="term" value="P:establishment of epithelial cell polarity"/>
    <property type="evidence" value="ECO:0007669"/>
    <property type="project" value="Ensembl"/>
</dbReference>
<dbReference type="GO" id="GO:0097284">
    <property type="term" value="P:hepatocyte apoptotic process"/>
    <property type="evidence" value="ECO:0007669"/>
    <property type="project" value="Ensembl"/>
</dbReference>
<dbReference type="GO" id="GO:0006886">
    <property type="term" value="P:intracellular protein transport"/>
    <property type="evidence" value="ECO:0000318"/>
    <property type="project" value="GO_Central"/>
</dbReference>
<dbReference type="GO" id="GO:0001889">
    <property type="term" value="P:liver development"/>
    <property type="evidence" value="ECO:0007669"/>
    <property type="project" value="Ensembl"/>
</dbReference>
<dbReference type="GO" id="GO:2000009">
    <property type="term" value="P:negative regulation of protein localization to cell surface"/>
    <property type="evidence" value="ECO:0007669"/>
    <property type="project" value="Ensembl"/>
</dbReference>
<dbReference type="GO" id="GO:0007399">
    <property type="term" value="P:nervous system development"/>
    <property type="evidence" value="ECO:0007669"/>
    <property type="project" value="UniProtKB-KW"/>
</dbReference>
<dbReference type="GO" id="GO:0030838">
    <property type="term" value="P:positive regulation of actin filament polymerization"/>
    <property type="evidence" value="ECO:0007669"/>
    <property type="project" value="Ensembl"/>
</dbReference>
<dbReference type="GO" id="GO:0120183">
    <property type="term" value="P:positive regulation of focal adhesion disassembly"/>
    <property type="evidence" value="ECO:0007669"/>
    <property type="project" value="Ensembl"/>
</dbReference>
<dbReference type="GO" id="GO:0051549">
    <property type="term" value="P:positive regulation of keratinocyte migration"/>
    <property type="evidence" value="ECO:0007669"/>
    <property type="project" value="Ensembl"/>
</dbReference>
<dbReference type="GO" id="GO:1903438">
    <property type="term" value="P:positive regulation of mitotic cytokinetic process"/>
    <property type="evidence" value="ECO:0007669"/>
    <property type="project" value="Ensembl"/>
</dbReference>
<dbReference type="GO" id="GO:0010976">
    <property type="term" value="P:positive regulation of neuron projection development"/>
    <property type="evidence" value="ECO:0007669"/>
    <property type="project" value="Ensembl"/>
</dbReference>
<dbReference type="GO" id="GO:1903078">
    <property type="term" value="P:positive regulation of protein localization to plasma membrane"/>
    <property type="evidence" value="ECO:0007669"/>
    <property type="project" value="Ensembl"/>
</dbReference>
<dbReference type="GO" id="GO:0050714">
    <property type="term" value="P:positive regulation of protein secretion"/>
    <property type="evidence" value="ECO:0007669"/>
    <property type="project" value="Ensembl"/>
</dbReference>
<dbReference type="GO" id="GO:0034394">
    <property type="term" value="P:protein localization to cell surface"/>
    <property type="evidence" value="ECO:0007669"/>
    <property type="project" value="Ensembl"/>
</dbReference>
<dbReference type="GO" id="GO:1905345">
    <property type="term" value="P:protein localization to cleavage furrow"/>
    <property type="evidence" value="ECO:0007669"/>
    <property type="project" value="Ensembl"/>
</dbReference>
<dbReference type="GO" id="GO:0036010">
    <property type="term" value="P:protein localization to endosome"/>
    <property type="evidence" value="ECO:0000250"/>
    <property type="project" value="UniProtKB"/>
</dbReference>
<dbReference type="GO" id="GO:0072659">
    <property type="term" value="P:protein localization to plasma membrane"/>
    <property type="evidence" value="ECO:0007669"/>
    <property type="project" value="Ensembl"/>
</dbReference>
<dbReference type="GO" id="GO:0060998">
    <property type="term" value="P:regulation of dendritic spine development"/>
    <property type="evidence" value="ECO:0000250"/>
    <property type="project" value="UniProtKB"/>
</dbReference>
<dbReference type="GO" id="GO:0051489">
    <property type="term" value="P:regulation of filopodium assembly"/>
    <property type="evidence" value="ECO:0007669"/>
    <property type="project" value="Ensembl"/>
</dbReference>
<dbReference type="GO" id="GO:0035020">
    <property type="term" value="P:regulation of Rac protein signal transduction"/>
    <property type="evidence" value="ECO:0007669"/>
    <property type="project" value="Ensembl"/>
</dbReference>
<dbReference type="GO" id="GO:0097178">
    <property type="term" value="P:ruffle assembly"/>
    <property type="evidence" value="ECO:0007669"/>
    <property type="project" value="Ensembl"/>
</dbReference>
<dbReference type="GO" id="GO:0016192">
    <property type="term" value="P:vesicle-mediated transport"/>
    <property type="evidence" value="ECO:0000318"/>
    <property type="project" value="GO_Central"/>
</dbReference>
<dbReference type="CDD" id="cd04149">
    <property type="entry name" value="Arf6"/>
    <property type="match status" value="1"/>
</dbReference>
<dbReference type="FunFam" id="3.40.50.300:FF:000286">
    <property type="entry name" value="ADP-ribosylation factor 6"/>
    <property type="match status" value="1"/>
</dbReference>
<dbReference type="Gene3D" id="3.40.50.300">
    <property type="entry name" value="P-loop containing nucleotide triphosphate hydrolases"/>
    <property type="match status" value="1"/>
</dbReference>
<dbReference type="InterPro" id="IPR041838">
    <property type="entry name" value="Arf6"/>
</dbReference>
<dbReference type="InterPro" id="IPR027417">
    <property type="entry name" value="P-loop_NTPase"/>
</dbReference>
<dbReference type="InterPro" id="IPR005225">
    <property type="entry name" value="Small_GTP-bd"/>
</dbReference>
<dbReference type="InterPro" id="IPR024156">
    <property type="entry name" value="Small_GTPase_ARF"/>
</dbReference>
<dbReference type="InterPro" id="IPR006689">
    <property type="entry name" value="Small_GTPase_ARF/SAR"/>
</dbReference>
<dbReference type="NCBIfam" id="TIGR00231">
    <property type="entry name" value="small_GTP"/>
    <property type="match status" value="1"/>
</dbReference>
<dbReference type="PANTHER" id="PTHR11711">
    <property type="entry name" value="ADP RIBOSYLATION FACTOR-RELATED"/>
    <property type="match status" value="1"/>
</dbReference>
<dbReference type="Pfam" id="PF00025">
    <property type="entry name" value="Arf"/>
    <property type="match status" value="1"/>
</dbReference>
<dbReference type="PRINTS" id="PR00328">
    <property type="entry name" value="SAR1GTPBP"/>
</dbReference>
<dbReference type="SMART" id="SM00177">
    <property type="entry name" value="ARF"/>
    <property type="match status" value="1"/>
</dbReference>
<dbReference type="SMART" id="SM00175">
    <property type="entry name" value="RAB"/>
    <property type="match status" value="1"/>
</dbReference>
<dbReference type="SMART" id="SM00178">
    <property type="entry name" value="SAR"/>
    <property type="match status" value="1"/>
</dbReference>
<dbReference type="SUPFAM" id="SSF52540">
    <property type="entry name" value="P-loop containing nucleoside triphosphate hydrolases"/>
    <property type="match status" value="1"/>
</dbReference>
<dbReference type="PROSITE" id="PS51417">
    <property type="entry name" value="ARF"/>
    <property type="match status" value="1"/>
</dbReference>
<protein>
    <recommendedName>
        <fullName>ADP-ribosylation factor 6</fullName>
        <ecNumber evidence="1">3.6.5.2</ecNumber>
    </recommendedName>
</protein>
<feature type="initiator methionine" description="Removed" evidence="1">
    <location>
        <position position="1"/>
    </location>
</feature>
<feature type="chain" id="PRO_0000289659" description="ADP-ribosylation factor 6">
    <location>
        <begin position="2"/>
        <end position="175"/>
    </location>
</feature>
<feature type="binding site" evidence="1">
    <location>
        <begin position="23"/>
        <end position="28"/>
    </location>
    <ligand>
        <name>GTP</name>
        <dbReference type="ChEBI" id="CHEBI:37565"/>
    </ligand>
</feature>
<feature type="binding site" evidence="1">
    <location>
        <begin position="41"/>
        <end position="44"/>
    </location>
    <ligand>
        <name>GTP</name>
        <dbReference type="ChEBI" id="CHEBI:37565"/>
    </ligand>
</feature>
<feature type="binding site" evidence="1">
    <location>
        <begin position="63"/>
        <end position="67"/>
    </location>
    <ligand>
        <name>GTP</name>
        <dbReference type="ChEBI" id="CHEBI:37565"/>
    </ligand>
</feature>
<feature type="binding site" evidence="1">
    <location>
        <begin position="122"/>
        <end position="125"/>
    </location>
    <ligand>
        <name>GTP</name>
        <dbReference type="ChEBI" id="CHEBI:37565"/>
    </ligand>
</feature>
<feature type="binding site" evidence="1">
    <location>
        <begin position="155"/>
        <end position="156"/>
    </location>
    <ligand>
        <name>GTP</name>
        <dbReference type="ChEBI" id="CHEBI:37565"/>
    </ligand>
</feature>
<feature type="lipid moiety-binding region" description="N-myristoyl glycine" evidence="1">
    <location>
        <position position="2"/>
    </location>
</feature>
<feature type="lipid moiety-binding region" description="N6-myristoyl lysine" evidence="1">
    <location>
        <position position="3"/>
    </location>
</feature>
<name>ARF6_PIG</name>
<organism>
    <name type="scientific">Sus scrofa</name>
    <name type="common">Pig</name>
    <dbReference type="NCBI Taxonomy" id="9823"/>
    <lineage>
        <taxon>Eukaryota</taxon>
        <taxon>Metazoa</taxon>
        <taxon>Chordata</taxon>
        <taxon>Craniata</taxon>
        <taxon>Vertebrata</taxon>
        <taxon>Euteleostomi</taxon>
        <taxon>Mammalia</taxon>
        <taxon>Eutheria</taxon>
        <taxon>Laurasiatheria</taxon>
        <taxon>Artiodactyla</taxon>
        <taxon>Suina</taxon>
        <taxon>Suidae</taxon>
        <taxon>Sus</taxon>
    </lineage>
</organism>
<comment type="function">
    <text evidence="1 2 3">GTP-binding protein involved in protein trafficking that regulates endocytic recycling and cytoskeleton remodeling (By similarity). Required for normal completion of mitotic cytokinesis (By similarity). Plays a role in the reorganization of the actin cytoskeleton and the formation of stress fibers (By similarity). Involved in the regulation of dendritic spine development, contributing to the regulation of dendritic branching and filopodia extension (By similarity). Plays an important role in membrane trafficking, during junctional remodeling and epithelial polarization. Regulates surface levels of adherens junction proteins such as CDH1 (By similarity). Required for NTRK1 sorting to the recycling pathway from early endosomes (By similarity).</text>
</comment>
<comment type="catalytic activity">
    <reaction evidence="1">
        <text>GTP + H2O = GDP + phosphate + H(+)</text>
        <dbReference type="Rhea" id="RHEA:19669"/>
        <dbReference type="ChEBI" id="CHEBI:15377"/>
        <dbReference type="ChEBI" id="CHEBI:15378"/>
        <dbReference type="ChEBI" id="CHEBI:37565"/>
        <dbReference type="ChEBI" id="CHEBI:43474"/>
        <dbReference type="ChEBI" id="CHEBI:58189"/>
        <dbReference type="EC" id="3.6.5.2"/>
    </reaction>
    <physiologicalReaction direction="left-to-right" evidence="1">
        <dbReference type="Rhea" id="RHEA:19670"/>
    </physiologicalReaction>
</comment>
<comment type="activity regulation">
    <text evidence="1 3">Activation is generally mediated by a guanine exchange factor (GEF), while inactivation through hydrolysis of bound GTP is catalyzed by a GTPase activating protein (GAP). Activated by ASAP3. Inactivated by ACAP1 and ACAP2 (By similarity). Activated by NGF via NTRK1 (By similarity).</text>
</comment>
<comment type="subunit">
    <text evidence="1 2 3">Interacts (when activated) with GGA1, GGA2 and GGA3; the interaction is required for proper subcellular location of GGA1, GGA2 and GGA3 (By similarity). Interacts with PIP5K1C. Interacts with USP6 (via Rab-GAP TBC domain). Interacts with RAB11FIP3 and RAB11FIP4. Interacts with HERC1. Interacts with ARHGAP21. Interacts with ASAP3; the interaction is stabilized by calcium ions. Interacts with NCS1/FREQ at the plasma membrane. Interacts with TBC1D24. Interacts with ECPAS. Interacts with MICALL1. Interacts with SPAG9 homodimers, forming heterotetramers. Interacts with CYTH3 (By similarity). Interacts with ASAP2 (By similarity). Interacts with UACA (By similarity). Interacts with KIF23, forming heterodimers and heterotetramers (By similarity). Interacts with C9orf72 (By similarity). Interacts (GTP-bound form) with TJAP1/PILT (By similarity).</text>
</comment>
<comment type="subcellular location">
    <subcellularLocation>
        <location evidence="1">Cytoplasm</location>
        <location evidence="1">Cytosol</location>
    </subcellularLocation>
    <subcellularLocation>
        <location evidence="1">Cell membrane</location>
        <topology evidence="1">Lipid-anchor</topology>
    </subcellularLocation>
    <subcellularLocation>
        <location evidence="1">Endosome membrane</location>
        <topology evidence="1">Lipid-anchor</topology>
    </subcellularLocation>
    <subcellularLocation>
        <location evidence="1">Recycling endosome membrane</location>
        <topology evidence="1">Lipid-anchor</topology>
    </subcellularLocation>
    <subcellularLocation>
        <location evidence="1">Cell projection</location>
        <location evidence="1">Filopodium membrane</location>
        <topology evidence="1">Lipid-anchor</topology>
    </subcellularLocation>
    <subcellularLocation>
        <location evidence="1">Cell projection</location>
        <location evidence="1">Ruffle</location>
    </subcellularLocation>
    <subcellularLocation>
        <location evidence="1">Cleavage furrow</location>
    </subcellularLocation>
    <subcellularLocation>
        <location evidence="1">Midbody</location>
        <location evidence="1">Midbody ring</location>
    </subcellularLocation>
    <subcellularLocation>
        <location evidence="2">Early endosome membrane</location>
        <topology evidence="2">Lipid-anchor</topology>
    </subcellularLocation>
    <subcellularLocation>
        <location evidence="2">Golgi apparatus</location>
        <location evidence="2">trans-Golgi network membrane</location>
        <topology evidence="2">Lipid-anchor</topology>
    </subcellularLocation>
    <text evidence="1 2">Distributed uniformly on the plasma membrane, as well as throughout the cytoplasm during metaphase. Subsequently concentrated at patches in the equatorial region at the onset of cytokinesis, and becomes distributed in the equatorial region concurrent with cleavage furrow ingression. In late stages of cytokinesis, concentrates at the midbody ring/Flemming body (By similarity). Recruitment to the midbody ring requires both activation by PSD/EFA6A and interaction with KIF23/MKLP1 (By similarity). After abscission of the intercellular bridge, incorporated into one of the daughter cells as a midbody remnant and localizes to punctate structures beneath the plasma membrane (By similarity). Recruited to the cell membrane in association with CYTH2 and ARL4C. Colocalizes with DAB2IP at the plasma membrane and endocytic vesicles (By similarity). Myristoylation is required for proper localization to membranes: myristoylation on Lys-3 allows ARF6 to remain on membranes during the GTPase cycle (By similarity).</text>
</comment>
<comment type="PTM">
    <text evidence="1">GTP-bound form is myristoylated on Lys-3 by NMT1 and NMT2, allowing ARF6 to remain on membranes during the GTPase cycle, thereby promoting its activity. GDP-bound inactive form is demyristoylated on Lys-3 by SIRT2 at early endosomes or endocytic recycling compartment to allow its efficient activation by a guanine exchange factor (GEF) after GDP release.</text>
</comment>
<comment type="similarity">
    <text evidence="4">Belongs to the small GTPase superfamily. Arf family.</text>
</comment>
<keyword id="KW-1003">Cell membrane</keyword>
<keyword id="KW-0966">Cell projection</keyword>
<keyword id="KW-0963">Cytoplasm</keyword>
<keyword id="KW-0221">Differentiation</keyword>
<keyword id="KW-0967">Endosome</keyword>
<keyword id="KW-0333">Golgi apparatus</keyword>
<keyword id="KW-0342">GTP-binding</keyword>
<keyword id="KW-0378">Hydrolase</keyword>
<keyword id="KW-0449">Lipoprotein</keyword>
<keyword id="KW-0472">Membrane</keyword>
<keyword id="KW-0519">Myristate</keyword>
<keyword id="KW-0524">Neurogenesis</keyword>
<keyword id="KW-0547">Nucleotide-binding</keyword>
<keyword id="KW-0653">Protein transport</keyword>
<keyword id="KW-1185">Reference proteome</keyword>
<keyword id="KW-0813">Transport</keyword>
<sequence>MGKVLSKIFGNKEMRILMLGLDAAGKTTILYKLKLGQSVTTIPTVGFNVETVTYKNVKFNVWDVGGQDKIRPLWRHYYTGTQGLIFVVDCADRDRIDEARQELHRIINDREMRDAIILIFANKQDLPDAMKPHEIQEKLGLTRIRDRNWYVQPSCATSGDGLYEGLTWLTSNYKS</sequence>
<accession>Q007T5</accession>
<gene>
    <name type="primary">ARF6</name>
</gene>
<proteinExistence type="evidence at transcript level"/>